<organism>
    <name type="scientific">Streptococcus gordonii (strain Challis / ATCC 35105 / BCRC 15272 / CH1 / DL1 / V288)</name>
    <dbReference type="NCBI Taxonomy" id="467705"/>
    <lineage>
        <taxon>Bacteria</taxon>
        <taxon>Bacillati</taxon>
        <taxon>Bacillota</taxon>
        <taxon>Bacilli</taxon>
        <taxon>Lactobacillales</taxon>
        <taxon>Streptococcaceae</taxon>
        <taxon>Streptococcus</taxon>
    </lineage>
</organism>
<gene>
    <name evidence="1" type="primary">hprK</name>
    <name type="ordered locus">SGO_0736</name>
</gene>
<accession>A8AW75</accession>
<keyword id="KW-0067">ATP-binding</keyword>
<keyword id="KW-0119">Carbohydrate metabolism</keyword>
<keyword id="KW-0418">Kinase</keyword>
<keyword id="KW-0460">Magnesium</keyword>
<keyword id="KW-0479">Metal-binding</keyword>
<keyword id="KW-0511">Multifunctional enzyme</keyword>
<keyword id="KW-0547">Nucleotide-binding</keyword>
<keyword id="KW-1185">Reference proteome</keyword>
<keyword id="KW-0723">Serine/threonine-protein kinase</keyword>
<keyword id="KW-0808">Transferase</keyword>
<protein>
    <recommendedName>
        <fullName evidence="1">HPr kinase/phosphorylase</fullName>
        <shortName evidence="1">HPrK/P</shortName>
        <ecNumber evidence="1">2.7.11.-</ecNumber>
        <ecNumber evidence="1">2.7.4.-</ecNumber>
    </recommendedName>
    <alternativeName>
        <fullName evidence="1">HPr(Ser) kinase/phosphorylase</fullName>
    </alternativeName>
</protein>
<proteinExistence type="inferred from homology"/>
<reference key="1">
    <citation type="journal article" date="2007" name="J. Bacteriol.">
        <title>Genome-wide transcriptional changes in Streptococcus gordonii in response to competence signaling peptide.</title>
        <authorList>
            <person name="Vickerman M.M."/>
            <person name="Iobst S."/>
            <person name="Jesionowski A.M."/>
            <person name="Gill S.R."/>
        </authorList>
    </citation>
    <scope>NUCLEOTIDE SEQUENCE [LARGE SCALE GENOMIC DNA]</scope>
    <source>
        <strain>Challis / ATCC 35105 / BCRC 15272 / CH1 / DL1 / V288</strain>
    </source>
</reference>
<comment type="function">
    <text evidence="1">Catalyzes the ATP- as well as the pyrophosphate-dependent phosphorylation of a specific serine residue in HPr, a phosphocarrier protein of the phosphoenolpyruvate-dependent sugar phosphotransferase system (PTS). HprK/P also catalyzes the pyrophosphate-producing, inorganic phosphate-dependent dephosphorylation (phosphorolysis) of seryl-phosphorylated HPr (P-Ser-HPr). The two antagonistic activities of HprK/P are regulated by several intracellular metabolites, which change their concentration in response to the absence or presence of rapidly metabolisable carbon sources (glucose, fructose, etc.) in the growth medium. Therefore, by controlling the phosphorylation state of HPr, HPrK/P is a sensor enzyme that plays a major role in the regulation of carbon metabolism and sugar transport: it mediates carbon catabolite repression (CCR), and regulates PTS-catalyzed carbohydrate uptake and inducer exclusion.</text>
</comment>
<comment type="catalytic activity">
    <reaction evidence="1">
        <text>[HPr protein]-L-serine + ATP = [HPr protein]-O-phospho-L-serine + ADP + H(+)</text>
        <dbReference type="Rhea" id="RHEA:46600"/>
        <dbReference type="Rhea" id="RHEA-COMP:11602"/>
        <dbReference type="Rhea" id="RHEA-COMP:11603"/>
        <dbReference type="ChEBI" id="CHEBI:15378"/>
        <dbReference type="ChEBI" id="CHEBI:29999"/>
        <dbReference type="ChEBI" id="CHEBI:30616"/>
        <dbReference type="ChEBI" id="CHEBI:83421"/>
        <dbReference type="ChEBI" id="CHEBI:456216"/>
    </reaction>
</comment>
<comment type="catalytic activity">
    <reaction evidence="1">
        <text>[HPr protein]-O-phospho-L-serine + phosphate + H(+) = [HPr protein]-L-serine + diphosphate</text>
        <dbReference type="Rhea" id="RHEA:46604"/>
        <dbReference type="Rhea" id="RHEA-COMP:11602"/>
        <dbReference type="Rhea" id="RHEA-COMP:11603"/>
        <dbReference type="ChEBI" id="CHEBI:15378"/>
        <dbReference type="ChEBI" id="CHEBI:29999"/>
        <dbReference type="ChEBI" id="CHEBI:33019"/>
        <dbReference type="ChEBI" id="CHEBI:43474"/>
        <dbReference type="ChEBI" id="CHEBI:83421"/>
    </reaction>
</comment>
<comment type="cofactor">
    <cofactor evidence="1">
        <name>Mg(2+)</name>
        <dbReference type="ChEBI" id="CHEBI:18420"/>
    </cofactor>
</comment>
<comment type="subunit">
    <text evidence="1">Homohexamer.</text>
</comment>
<comment type="domain">
    <text evidence="1">The Walker A ATP-binding motif also binds Pi and PPi.</text>
</comment>
<comment type="miscellaneous">
    <text evidence="1">Both phosphorylation and phosphorolysis are carried out by the same active site and suggest a common mechanism for both reactions.</text>
</comment>
<comment type="similarity">
    <text evidence="1">Belongs to the HPrK/P family.</text>
</comment>
<name>HPRK_STRGC</name>
<evidence type="ECO:0000255" key="1">
    <source>
        <dbReference type="HAMAP-Rule" id="MF_01249"/>
    </source>
</evidence>
<feature type="chain" id="PRO_1000085799" description="HPr kinase/phosphorylase">
    <location>
        <begin position="1"/>
        <end position="311"/>
    </location>
</feature>
<feature type="region of interest" description="Important for the catalytic mechanism of both phosphorylation and dephosphorylation" evidence="1">
    <location>
        <begin position="201"/>
        <end position="210"/>
    </location>
</feature>
<feature type="region of interest" description="Important for the catalytic mechanism of dephosphorylation" evidence="1">
    <location>
        <begin position="264"/>
        <end position="269"/>
    </location>
</feature>
<feature type="active site" evidence="1">
    <location>
        <position position="138"/>
    </location>
</feature>
<feature type="active site" evidence="1">
    <location>
        <position position="159"/>
    </location>
</feature>
<feature type="active site" description="Proton acceptor; for phosphorylation activity. Proton donor; for dephosphorylation activity" evidence="1">
    <location>
        <position position="177"/>
    </location>
</feature>
<feature type="active site" evidence="1">
    <location>
        <position position="243"/>
    </location>
</feature>
<feature type="binding site" evidence="1">
    <location>
        <begin position="153"/>
        <end position="160"/>
    </location>
    <ligand>
        <name>ATP</name>
        <dbReference type="ChEBI" id="CHEBI:30616"/>
    </ligand>
</feature>
<feature type="binding site" evidence="1">
    <location>
        <position position="160"/>
    </location>
    <ligand>
        <name>Mg(2+)</name>
        <dbReference type="ChEBI" id="CHEBI:18420"/>
    </ligand>
</feature>
<feature type="binding site" evidence="1">
    <location>
        <position position="202"/>
    </location>
    <ligand>
        <name>Mg(2+)</name>
        <dbReference type="ChEBI" id="CHEBI:18420"/>
    </ligand>
</feature>
<sequence length="311" mass="35164">MSVKVKDLLQKVRLQLIYGSEDLLEKEITTSDISRPGLEMTGYFDYYTPERIQLIGMKEWSYLMKMTSHNRHQVLLKMFQPTTPVVIIARDLEIPDEMMQAAQEKQIVILRSHTSTSRLSGEISSYLDSRLAERTSIHGVLMDIYGMGVLIQGDSGIGKSETGLELVKRGHRLVADDRVDIFAKDEMTLWGEPAEILRHLLEIRGVGIIDVMSLYGASAVKDSSQVQIAVYLENYDVNKTFDRLGNASDELEIAGVRIPRVRIPVKTGRNISVVIEAAAMNYRAKEMGFDATKIFEERLTNLISQNEVKHD</sequence>
<dbReference type="EC" id="2.7.11.-" evidence="1"/>
<dbReference type="EC" id="2.7.4.-" evidence="1"/>
<dbReference type="EMBL" id="CP000725">
    <property type="protein sequence ID" value="ABV10838.1"/>
    <property type="molecule type" value="Genomic_DNA"/>
</dbReference>
<dbReference type="RefSeq" id="WP_012000201.1">
    <property type="nucleotide sequence ID" value="NC_009785.1"/>
</dbReference>
<dbReference type="SMR" id="A8AW75"/>
<dbReference type="STRING" id="467705.SGO_0736"/>
<dbReference type="KEGG" id="sgo:SGO_0736"/>
<dbReference type="eggNOG" id="COG1493">
    <property type="taxonomic scope" value="Bacteria"/>
</dbReference>
<dbReference type="HOGENOM" id="CLU_052030_0_1_9"/>
<dbReference type="Proteomes" id="UP000001131">
    <property type="component" value="Chromosome"/>
</dbReference>
<dbReference type="GO" id="GO:0005524">
    <property type="term" value="F:ATP binding"/>
    <property type="evidence" value="ECO:0007669"/>
    <property type="project" value="UniProtKB-UniRule"/>
</dbReference>
<dbReference type="GO" id="GO:0000287">
    <property type="term" value="F:magnesium ion binding"/>
    <property type="evidence" value="ECO:0007669"/>
    <property type="project" value="UniProtKB-UniRule"/>
</dbReference>
<dbReference type="GO" id="GO:0000155">
    <property type="term" value="F:phosphorelay sensor kinase activity"/>
    <property type="evidence" value="ECO:0007669"/>
    <property type="project" value="InterPro"/>
</dbReference>
<dbReference type="GO" id="GO:0004674">
    <property type="term" value="F:protein serine/threonine kinase activity"/>
    <property type="evidence" value="ECO:0007669"/>
    <property type="project" value="UniProtKB-KW"/>
</dbReference>
<dbReference type="GO" id="GO:0004712">
    <property type="term" value="F:protein serine/threonine/tyrosine kinase activity"/>
    <property type="evidence" value="ECO:0007669"/>
    <property type="project" value="UniProtKB-UniRule"/>
</dbReference>
<dbReference type="GO" id="GO:0006109">
    <property type="term" value="P:regulation of carbohydrate metabolic process"/>
    <property type="evidence" value="ECO:0007669"/>
    <property type="project" value="UniProtKB-UniRule"/>
</dbReference>
<dbReference type="CDD" id="cd01918">
    <property type="entry name" value="HprK_C"/>
    <property type="match status" value="1"/>
</dbReference>
<dbReference type="FunFam" id="3.40.50.300:FF:000174">
    <property type="entry name" value="HPr kinase/phosphorylase"/>
    <property type="match status" value="1"/>
</dbReference>
<dbReference type="Gene3D" id="3.40.1390.20">
    <property type="entry name" value="HprK N-terminal domain-like"/>
    <property type="match status" value="1"/>
</dbReference>
<dbReference type="Gene3D" id="3.40.50.300">
    <property type="entry name" value="P-loop containing nucleotide triphosphate hydrolases"/>
    <property type="match status" value="1"/>
</dbReference>
<dbReference type="HAMAP" id="MF_01249">
    <property type="entry name" value="HPr_kinase"/>
    <property type="match status" value="1"/>
</dbReference>
<dbReference type="InterPro" id="IPR003755">
    <property type="entry name" value="HPr(Ser)_kin/Pase"/>
</dbReference>
<dbReference type="InterPro" id="IPR011104">
    <property type="entry name" value="Hpr_kin/Pase_C"/>
</dbReference>
<dbReference type="InterPro" id="IPR011126">
    <property type="entry name" value="Hpr_kin/Pase_Hpr_N"/>
</dbReference>
<dbReference type="InterPro" id="IPR027417">
    <property type="entry name" value="P-loop_NTPase"/>
</dbReference>
<dbReference type="InterPro" id="IPR028979">
    <property type="entry name" value="Ser_kin/Pase_Hpr-like_N_sf"/>
</dbReference>
<dbReference type="NCBIfam" id="TIGR00679">
    <property type="entry name" value="hpr-ser"/>
    <property type="match status" value="1"/>
</dbReference>
<dbReference type="PANTHER" id="PTHR30305:SF1">
    <property type="entry name" value="HPR KINASE_PHOSPHORYLASE"/>
    <property type="match status" value="1"/>
</dbReference>
<dbReference type="PANTHER" id="PTHR30305">
    <property type="entry name" value="PROTEIN YJDM-RELATED"/>
    <property type="match status" value="1"/>
</dbReference>
<dbReference type="Pfam" id="PF07475">
    <property type="entry name" value="Hpr_kinase_C"/>
    <property type="match status" value="1"/>
</dbReference>
<dbReference type="Pfam" id="PF02603">
    <property type="entry name" value="Hpr_kinase_N"/>
    <property type="match status" value="1"/>
</dbReference>
<dbReference type="SUPFAM" id="SSF75138">
    <property type="entry name" value="HprK N-terminal domain-like"/>
    <property type="match status" value="1"/>
</dbReference>
<dbReference type="SUPFAM" id="SSF53795">
    <property type="entry name" value="PEP carboxykinase-like"/>
    <property type="match status" value="1"/>
</dbReference>